<proteinExistence type="inferred from homology"/>
<comment type="catalytic activity">
    <reaction evidence="1">
        <text>tRNA(Gly) + glycine + ATP = glycyl-tRNA(Gly) + AMP + diphosphate</text>
        <dbReference type="Rhea" id="RHEA:16013"/>
        <dbReference type="Rhea" id="RHEA-COMP:9664"/>
        <dbReference type="Rhea" id="RHEA-COMP:9683"/>
        <dbReference type="ChEBI" id="CHEBI:30616"/>
        <dbReference type="ChEBI" id="CHEBI:33019"/>
        <dbReference type="ChEBI" id="CHEBI:57305"/>
        <dbReference type="ChEBI" id="CHEBI:78442"/>
        <dbReference type="ChEBI" id="CHEBI:78522"/>
        <dbReference type="ChEBI" id="CHEBI:456215"/>
        <dbReference type="EC" id="6.1.1.14"/>
    </reaction>
</comment>
<comment type="subunit">
    <text evidence="1">Tetramer of two alpha and two beta subunits.</text>
</comment>
<comment type="subcellular location">
    <subcellularLocation>
        <location evidence="1">Cytoplasm</location>
    </subcellularLocation>
</comment>
<comment type="similarity">
    <text evidence="1">Belongs to the class-II aminoacyl-tRNA synthetase family.</text>
</comment>
<organism>
    <name type="scientific">Klebsiella pneumoniae (strain 342)</name>
    <dbReference type="NCBI Taxonomy" id="507522"/>
    <lineage>
        <taxon>Bacteria</taxon>
        <taxon>Pseudomonadati</taxon>
        <taxon>Pseudomonadota</taxon>
        <taxon>Gammaproteobacteria</taxon>
        <taxon>Enterobacterales</taxon>
        <taxon>Enterobacteriaceae</taxon>
        <taxon>Klebsiella/Raoultella group</taxon>
        <taxon>Klebsiella</taxon>
        <taxon>Klebsiella pneumoniae complex</taxon>
    </lineage>
</organism>
<evidence type="ECO:0000255" key="1">
    <source>
        <dbReference type="HAMAP-Rule" id="MF_00255"/>
    </source>
</evidence>
<feature type="chain" id="PRO_1000101288" description="Glycine--tRNA ligase beta subunit">
    <location>
        <begin position="1"/>
        <end position="689"/>
    </location>
</feature>
<name>SYGB_KLEP3</name>
<reference key="1">
    <citation type="journal article" date="2008" name="PLoS Genet.">
        <title>Complete genome sequence of the N2-fixing broad host range endophyte Klebsiella pneumoniae 342 and virulence predictions verified in mice.</title>
        <authorList>
            <person name="Fouts D.E."/>
            <person name="Tyler H.L."/>
            <person name="DeBoy R.T."/>
            <person name="Daugherty S."/>
            <person name="Ren Q."/>
            <person name="Badger J.H."/>
            <person name="Durkin A.S."/>
            <person name="Huot H."/>
            <person name="Shrivastava S."/>
            <person name="Kothari S."/>
            <person name="Dodson R.J."/>
            <person name="Mohamoud Y."/>
            <person name="Khouri H."/>
            <person name="Roesch L.F.W."/>
            <person name="Krogfelt K.A."/>
            <person name="Struve C."/>
            <person name="Triplett E.W."/>
            <person name="Methe B.A."/>
        </authorList>
    </citation>
    <scope>NUCLEOTIDE SEQUENCE [LARGE SCALE GENOMIC DNA]</scope>
    <source>
        <strain>342</strain>
    </source>
</reference>
<keyword id="KW-0030">Aminoacyl-tRNA synthetase</keyword>
<keyword id="KW-0067">ATP-binding</keyword>
<keyword id="KW-0963">Cytoplasm</keyword>
<keyword id="KW-0436">Ligase</keyword>
<keyword id="KW-0547">Nucleotide-binding</keyword>
<keyword id="KW-0648">Protein biosynthesis</keyword>
<sequence length="689" mass="76245">MSENTFLVEIGTEELPPKALRSLAESFAANVTAELDNAGLAHGKVEWFAAPRRLALKVANLAAAQADREVEKRGPAIAQAFDAEGKPSKAAEGWARGCGITVDQAERLTTDKGEWLLYRAHVKGESTEALLPNMIASSLAKLPIPKLMRWGASDVHFVRPVHTVTLLLGDKVIPATILGIPSDRVIRGHRFMGEPEFTIDHADQYPQILLERGKVIADYEQRKAKIKADAEEAARKIGGQADLSESLLEEVTSLVEWPVVLTAKFEEKFLGVPSEALVYTMKGDQKYFPVYDNAGKLLPNFIFVANIESKDPQQIISGNEKVVRPRLADAEFFFNTDRKKRLEDNLPRLETVLFQQQLGTLRDKTDRIQALAGWIAGQIGADVNHATRAGLLSKCDLMTNMVFEFTDTQGVMGMHYARHDGEAEDVAVALNEQYQPRFAGDALPSNPVACAVAIADKMDTLAGIFGIGQHPKGDKDPFALRRAALGVLRIIVEKNLNLDLQTLTEEAVRLYGEKLTNANVVDDVIDFMLGRFRAWYQDEGYGVDTIQAVLARRPTRPADFDARMKAVSHFRTLEESSALAAANKRVSNILAKSDETLNDIVHASVLKEAAEIKLAGNLVVLRDKLQPYFAAGRYQDALIELAALREPVDEFFENVMVNAEDKDVRINRLTLLSKLRELFLQVADISLLQ</sequence>
<dbReference type="EC" id="6.1.1.14" evidence="1"/>
<dbReference type="EMBL" id="CP000964">
    <property type="protein sequence ID" value="ACI09901.1"/>
    <property type="molecule type" value="Genomic_DNA"/>
</dbReference>
<dbReference type="SMR" id="B5XMY7"/>
<dbReference type="KEGG" id="kpe:KPK_0183"/>
<dbReference type="HOGENOM" id="CLU_007220_2_2_6"/>
<dbReference type="Proteomes" id="UP000001734">
    <property type="component" value="Chromosome"/>
</dbReference>
<dbReference type="GO" id="GO:0005829">
    <property type="term" value="C:cytosol"/>
    <property type="evidence" value="ECO:0007669"/>
    <property type="project" value="TreeGrafter"/>
</dbReference>
<dbReference type="GO" id="GO:0004814">
    <property type="term" value="F:arginine-tRNA ligase activity"/>
    <property type="evidence" value="ECO:0007669"/>
    <property type="project" value="InterPro"/>
</dbReference>
<dbReference type="GO" id="GO:0005524">
    <property type="term" value="F:ATP binding"/>
    <property type="evidence" value="ECO:0007669"/>
    <property type="project" value="UniProtKB-UniRule"/>
</dbReference>
<dbReference type="GO" id="GO:0004820">
    <property type="term" value="F:glycine-tRNA ligase activity"/>
    <property type="evidence" value="ECO:0007669"/>
    <property type="project" value="UniProtKB-UniRule"/>
</dbReference>
<dbReference type="GO" id="GO:0006420">
    <property type="term" value="P:arginyl-tRNA aminoacylation"/>
    <property type="evidence" value="ECO:0007669"/>
    <property type="project" value="InterPro"/>
</dbReference>
<dbReference type="GO" id="GO:0006426">
    <property type="term" value="P:glycyl-tRNA aminoacylation"/>
    <property type="evidence" value="ECO:0007669"/>
    <property type="project" value="UniProtKB-UniRule"/>
</dbReference>
<dbReference type="HAMAP" id="MF_00255">
    <property type="entry name" value="Gly_tRNA_synth_beta"/>
    <property type="match status" value="1"/>
</dbReference>
<dbReference type="InterPro" id="IPR008909">
    <property type="entry name" value="DALR_anticod-bd"/>
</dbReference>
<dbReference type="InterPro" id="IPR015944">
    <property type="entry name" value="Gly-tRNA-synth_bsu"/>
</dbReference>
<dbReference type="InterPro" id="IPR006194">
    <property type="entry name" value="Gly-tRNA-synth_heterodimer"/>
</dbReference>
<dbReference type="NCBIfam" id="TIGR00211">
    <property type="entry name" value="glyS"/>
    <property type="match status" value="1"/>
</dbReference>
<dbReference type="PANTHER" id="PTHR30075:SF2">
    <property type="entry name" value="GLYCINE--TRNA LIGASE, CHLOROPLASTIC_MITOCHONDRIAL 2"/>
    <property type="match status" value="1"/>
</dbReference>
<dbReference type="PANTHER" id="PTHR30075">
    <property type="entry name" value="GLYCYL-TRNA SYNTHETASE"/>
    <property type="match status" value="1"/>
</dbReference>
<dbReference type="Pfam" id="PF05746">
    <property type="entry name" value="DALR_1"/>
    <property type="match status" value="1"/>
</dbReference>
<dbReference type="Pfam" id="PF02092">
    <property type="entry name" value="tRNA_synt_2f"/>
    <property type="match status" value="1"/>
</dbReference>
<dbReference type="PRINTS" id="PR01045">
    <property type="entry name" value="TRNASYNTHGB"/>
</dbReference>
<dbReference type="SUPFAM" id="SSF109604">
    <property type="entry name" value="HD-domain/PDEase-like"/>
    <property type="match status" value="1"/>
</dbReference>
<dbReference type="PROSITE" id="PS50861">
    <property type="entry name" value="AA_TRNA_LIGASE_II_GLYAB"/>
    <property type="match status" value="1"/>
</dbReference>
<gene>
    <name evidence="1" type="primary">glyS</name>
    <name type="ordered locus">KPK_0183</name>
</gene>
<protein>
    <recommendedName>
        <fullName evidence="1">Glycine--tRNA ligase beta subunit</fullName>
        <ecNumber evidence="1">6.1.1.14</ecNumber>
    </recommendedName>
    <alternativeName>
        <fullName evidence="1">Glycyl-tRNA synthetase beta subunit</fullName>
        <shortName evidence="1">GlyRS</shortName>
    </alternativeName>
</protein>
<accession>B5XMY7</accession>